<gene>
    <name evidence="1" type="primary">upp</name>
    <name type="ordered locus">EcSMS35_2645</name>
</gene>
<comment type="function">
    <text evidence="1">Catalyzes the conversion of uracil and 5-phospho-alpha-D-ribose 1-diphosphate (PRPP) to UMP and diphosphate.</text>
</comment>
<comment type="catalytic activity">
    <reaction evidence="1">
        <text>UMP + diphosphate = 5-phospho-alpha-D-ribose 1-diphosphate + uracil</text>
        <dbReference type="Rhea" id="RHEA:13017"/>
        <dbReference type="ChEBI" id="CHEBI:17568"/>
        <dbReference type="ChEBI" id="CHEBI:33019"/>
        <dbReference type="ChEBI" id="CHEBI:57865"/>
        <dbReference type="ChEBI" id="CHEBI:58017"/>
        <dbReference type="EC" id="2.4.2.9"/>
    </reaction>
</comment>
<comment type="cofactor">
    <cofactor evidence="1">
        <name>Mg(2+)</name>
        <dbReference type="ChEBI" id="CHEBI:18420"/>
    </cofactor>
    <text evidence="1">Binds 1 Mg(2+) ion per subunit. The magnesium is bound as Mg-PRPP.</text>
</comment>
<comment type="activity regulation">
    <text evidence="1">Allosterically activated by GTP.</text>
</comment>
<comment type="pathway">
    <text evidence="1">Pyrimidine metabolism; UMP biosynthesis via salvage pathway; UMP from uracil: step 1/1.</text>
</comment>
<comment type="similarity">
    <text evidence="1">Belongs to the UPRTase family.</text>
</comment>
<protein>
    <recommendedName>
        <fullName evidence="1">Uracil phosphoribosyltransferase</fullName>
        <ecNumber evidence="1">2.4.2.9</ecNumber>
    </recommendedName>
    <alternativeName>
        <fullName evidence="1">UMP pyrophosphorylase</fullName>
    </alternativeName>
    <alternativeName>
        <fullName evidence="1">UPRTase</fullName>
    </alternativeName>
</protein>
<proteinExistence type="inferred from homology"/>
<evidence type="ECO:0000255" key="1">
    <source>
        <dbReference type="HAMAP-Rule" id="MF_01218"/>
    </source>
</evidence>
<dbReference type="EC" id="2.4.2.9" evidence="1"/>
<dbReference type="EMBL" id="CP000970">
    <property type="protein sequence ID" value="ACB19000.1"/>
    <property type="molecule type" value="Genomic_DNA"/>
</dbReference>
<dbReference type="RefSeq" id="WP_001295473.1">
    <property type="nucleotide sequence ID" value="NC_010498.1"/>
</dbReference>
<dbReference type="SMR" id="B1LNE8"/>
<dbReference type="GeneID" id="93774638"/>
<dbReference type="KEGG" id="ecm:EcSMS35_2645"/>
<dbReference type="HOGENOM" id="CLU_067096_2_2_6"/>
<dbReference type="UniPathway" id="UPA00574">
    <property type="reaction ID" value="UER00636"/>
</dbReference>
<dbReference type="Proteomes" id="UP000007011">
    <property type="component" value="Chromosome"/>
</dbReference>
<dbReference type="GO" id="GO:0005525">
    <property type="term" value="F:GTP binding"/>
    <property type="evidence" value="ECO:0007669"/>
    <property type="project" value="UniProtKB-KW"/>
</dbReference>
<dbReference type="GO" id="GO:0000287">
    <property type="term" value="F:magnesium ion binding"/>
    <property type="evidence" value="ECO:0007669"/>
    <property type="project" value="UniProtKB-UniRule"/>
</dbReference>
<dbReference type="GO" id="GO:0004845">
    <property type="term" value="F:uracil phosphoribosyltransferase activity"/>
    <property type="evidence" value="ECO:0007669"/>
    <property type="project" value="UniProtKB-UniRule"/>
</dbReference>
<dbReference type="GO" id="GO:0044206">
    <property type="term" value="P:UMP salvage"/>
    <property type="evidence" value="ECO:0007669"/>
    <property type="project" value="UniProtKB-UniRule"/>
</dbReference>
<dbReference type="GO" id="GO:0006223">
    <property type="term" value="P:uracil salvage"/>
    <property type="evidence" value="ECO:0007669"/>
    <property type="project" value="InterPro"/>
</dbReference>
<dbReference type="CDD" id="cd06223">
    <property type="entry name" value="PRTases_typeI"/>
    <property type="match status" value="1"/>
</dbReference>
<dbReference type="FunFam" id="3.40.50.2020:FF:000003">
    <property type="entry name" value="Uracil phosphoribosyltransferase"/>
    <property type="match status" value="1"/>
</dbReference>
<dbReference type="Gene3D" id="3.40.50.2020">
    <property type="match status" value="1"/>
</dbReference>
<dbReference type="HAMAP" id="MF_01218_B">
    <property type="entry name" value="Upp_B"/>
    <property type="match status" value="1"/>
</dbReference>
<dbReference type="InterPro" id="IPR000836">
    <property type="entry name" value="PRibTrfase_dom"/>
</dbReference>
<dbReference type="InterPro" id="IPR029057">
    <property type="entry name" value="PRTase-like"/>
</dbReference>
<dbReference type="InterPro" id="IPR034332">
    <property type="entry name" value="Upp_B"/>
</dbReference>
<dbReference type="InterPro" id="IPR050054">
    <property type="entry name" value="UPRTase/APRTase"/>
</dbReference>
<dbReference type="InterPro" id="IPR005765">
    <property type="entry name" value="Ura_phspho_trans"/>
</dbReference>
<dbReference type="NCBIfam" id="NF001097">
    <property type="entry name" value="PRK00129.1"/>
    <property type="match status" value="1"/>
</dbReference>
<dbReference type="NCBIfam" id="TIGR01091">
    <property type="entry name" value="upp"/>
    <property type="match status" value="1"/>
</dbReference>
<dbReference type="PANTHER" id="PTHR32315">
    <property type="entry name" value="ADENINE PHOSPHORIBOSYLTRANSFERASE"/>
    <property type="match status" value="1"/>
</dbReference>
<dbReference type="PANTHER" id="PTHR32315:SF4">
    <property type="entry name" value="URACIL PHOSPHORIBOSYLTRANSFERASE, CHLOROPLASTIC"/>
    <property type="match status" value="1"/>
</dbReference>
<dbReference type="Pfam" id="PF14681">
    <property type="entry name" value="UPRTase"/>
    <property type="match status" value="1"/>
</dbReference>
<dbReference type="SUPFAM" id="SSF53271">
    <property type="entry name" value="PRTase-like"/>
    <property type="match status" value="1"/>
</dbReference>
<organism>
    <name type="scientific">Escherichia coli (strain SMS-3-5 / SECEC)</name>
    <dbReference type="NCBI Taxonomy" id="439855"/>
    <lineage>
        <taxon>Bacteria</taxon>
        <taxon>Pseudomonadati</taxon>
        <taxon>Pseudomonadota</taxon>
        <taxon>Gammaproteobacteria</taxon>
        <taxon>Enterobacterales</taxon>
        <taxon>Enterobacteriaceae</taxon>
        <taxon>Escherichia</taxon>
    </lineage>
</organism>
<name>UPP_ECOSM</name>
<reference key="1">
    <citation type="journal article" date="2008" name="J. Bacteriol.">
        <title>Insights into the environmental resistance gene pool from the genome sequence of the multidrug-resistant environmental isolate Escherichia coli SMS-3-5.</title>
        <authorList>
            <person name="Fricke W.F."/>
            <person name="Wright M.S."/>
            <person name="Lindell A.H."/>
            <person name="Harkins D.M."/>
            <person name="Baker-Austin C."/>
            <person name="Ravel J."/>
            <person name="Stepanauskas R."/>
        </authorList>
    </citation>
    <scope>NUCLEOTIDE SEQUENCE [LARGE SCALE GENOMIC DNA]</scope>
    <source>
        <strain>SMS-3-5 / SECEC</strain>
    </source>
</reference>
<keyword id="KW-0021">Allosteric enzyme</keyword>
<keyword id="KW-0328">Glycosyltransferase</keyword>
<keyword id="KW-0342">GTP-binding</keyword>
<keyword id="KW-0460">Magnesium</keyword>
<keyword id="KW-0547">Nucleotide-binding</keyword>
<keyword id="KW-0808">Transferase</keyword>
<accession>B1LNE8</accession>
<feature type="chain" id="PRO_1000139124" description="Uracil phosphoribosyltransferase">
    <location>
        <begin position="1"/>
        <end position="208"/>
    </location>
</feature>
<feature type="binding site" evidence="1">
    <location>
        <position position="78"/>
    </location>
    <ligand>
        <name>5-phospho-alpha-D-ribose 1-diphosphate</name>
        <dbReference type="ChEBI" id="CHEBI:58017"/>
    </ligand>
</feature>
<feature type="binding site" evidence="1">
    <location>
        <position position="103"/>
    </location>
    <ligand>
        <name>5-phospho-alpha-D-ribose 1-diphosphate</name>
        <dbReference type="ChEBI" id="CHEBI:58017"/>
    </ligand>
</feature>
<feature type="binding site" evidence="1">
    <location>
        <begin position="130"/>
        <end position="138"/>
    </location>
    <ligand>
        <name>5-phospho-alpha-D-ribose 1-diphosphate</name>
        <dbReference type="ChEBI" id="CHEBI:58017"/>
    </ligand>
</feature>
<feature type="binding site" evidence="1">
    <location>
        <position position="193"/>
    </location>
    <ligand>
        <name>uracil</name>
        <dbReference type="ChEBI" id="CHEBI:17568"/>
    </ligand>
</feature>
<feature type="binding site" evidence="1">
    <location>
        <begin position="198"/>
        <end position="200"/>
    </location>
    <ligand>
        <name>uracil</name>
        <dbReference type="ChEBI" id="CHEBI:17568"/>
    </ligand>
</feature>
<feature type="binding site" evidence="1">
    <location>
        <position position="199"/>
    </location>
    <ligand>
        <name>5-phospho-alpha-D-ribose 1-diphosphate</name>
        <dbReference type="ChEBI" id="CHEBI:58017"/>
    </ligand>
</feature>
<sequence>MKIVEVKHPLVKHKLGLMREQDISTKRFRELASEVGSLLTYEATADLETEKVTIEGWNGPVEIDQIKGKKITVVPILRAGLGMMDGVLENVPSARISVVGMYRNEETLEPVPYFQKLVSNIDERMALIVDPMLATGGSVIATIDLLKKAGCSSIKVLVLVAAPEGIAALEKAHPDVELYTASIDQGLNEHGYIIPGLGDAGDKIFGTK</sequence>